<protein>
    <recommendedName>
        <fullName evidence="1">Glycerol uptake facilitator protein</fullName>
    </recommendedName>
</protein>
<proteinExistence type="inferred from homology"/>
<feature type="chain" id="PRO_0000064090" description="Glycerol uptake facilitator protein">
    <location>
        <begin position="1"/>
        <end position="234"/>
    </location>
</feature>
<feature type="transmembrane region" description="Helical" evidence="2">
    <location>
        <begin position="9"/>
        <end position="29"/>
    </location>
</feature>
<feature type="transmembrane region" description="Helical" evidence="2">
    <location>
        <begin position="37"/>
        <end position="57"/>
    </location>
</feature>
<feature type="transmembrane region" description="Helical" evidence="2">
    <location>
        <begin position="61"/>
        <end position="81"/>
    </location>
</feature>
<feature type="transmembrane region" description="Helical" evidence="2">
    <location>
        <begin position="83"/>
        <end position="103"/>
    </location>
</feature>
<feature type="transmembrane region" description="Helical" evidence="2">
    <location>
        <begin position="135"/>
        <end position="155"/>
    </location>
</feature>
<feature type="transmembrane region" description="Helical" evidence="2">
    <location>
        <begin position="159"/>
        <end position="179"/>
    </location>
</feature>
<feature type="transmembrane region" description="Helical" evidence="2">
    <location>
        <begin position="214"/>
        <end position="234"/>
    </location>
</feature>
<feature type="short sequence motif" description="NPA 1" evidence="3">
    <location>
        <begin position="65"/>
        <end position="67"/>
    </location>
</feature>
<feature type="short sequence motif" description="NPA 2" evidence="3">
    <location>
        <begin position="186"/>
        <end position="188"/>
    </location>
</feature>
<feature type="sequence conflict" description="In Ref. 1; AAA91618." evidence="3" ref="1">
    <original>GW</original>
    <variation>V</variation>
    <location>
        <begin position="44"/>
        <end position="45"/>
    </location>
</feature>
<feature type="sequence conflict" description="In Ref. 1; AAA91618." evidence="3" ref="1">
    <original>Y</original>
    <variation>H</variation>
    <location>
        <position position="63"/>
    </location>
</feature>
<dbReference type="EMBL" id="U12567">
    <property type="protein sequence ID" value="AAA91618.1"/>
    <property type="molecule type" value="Genomic_DNA"/>
</dbReference>
<dbReference type="EMBL" id="AE005672">
    <property type="protein sequence ID" value="AAK76235.1"/>
    <property type="molecule type" value="Genomic_DNA"/>
</dbReference>
<dbReference type="PIR" id="B95255">
    <property type="entry name" value="B95255"/>
</dbReference>
<dbReference type="PIR" id="S67937">
    <property type="entry name" value="S67937"/>
</dbReference>
<dbReference type="RefSeq" id="WP_000980835.1">
    <property type="nucleotide sequence ID" value="NZ_CP155539.1"/>
</dbReference>
<dbReference type="SMR" id="P0A3Q7"/>
<dbReference type="PaxDb" id="170187-SP_2184"/>
<dbReference type="EnsemblBacteria" id="AAK76235">
    <property type="protein sequence ID" value="AAK76235"/>
    <property type="gene ID" value="SP_2184"/>
</dbReference>
<dbReference type="KEGG" id="spn:SP_2184"/>
<dbReference type="eggNOG" id="COG0580">
    <property type="taxonomic scope" value="Bacteria"/>
</dbReference>
<dbReference type="PhylomeDB" id="P0A3Q7"/>
<dbReference type="BioCyc" id="SPNE170187:G1FZB-2282-MONOMER"/>
<dbReference type="Proteomes" id="UP000000585">
    <property type="component" value="Chromosome"/>
</dbReference>
<dbReference type="GO" id="GO:0005886">
    <property type="term" value="C:plasma membrane"/>
    <property type="evidence" value="ECO:0007669"/>
    <property type="project" value="UniProtKB-SubCell"/>
</dbReference>
<dbReference type="GO" id="GO:0015254">
    <property type="term" value="F:glycerol channel activity"/>
    <property type="evidence" value="ECO:0007669"/>
    <property type="project" value="TreeGrafter"/>
</dbReference>
<dbReference type="Gene3D" id="1.20.1080.10">
    <property type="entry name" value="Glycerol uptake facilitator protein"/>
    <property type="match status" value="1"/>
</dbReference>
<dbReference type="InterPro" id="IPR023271">
    <property type="entry name" value="Aquaporin-like"/>
</dbReference>
<dbReference type="InterPro" id="IPR000425">
    <property type="entry name" value="MIP"/>
</dbReference>
<dbReference type="InterPro" id="IPR050363">
    <property type="entry name" value="MIP/Aquaporin"/>
</dbReference>
<dbReference type="NCBIfam" id="TIGR00861">
    <property type="entry name" value="MIP"/>
    <property type="match status" value="1"/>
</dbReference>
<dbReference type="PANTHER" id="PTHR43829">
    <property type="entry name" value="AQUAPORIN OR AQUAGLYCEROPORIN RELATED"/>
    <property type="match status" value="1"/>
</dbReference>
<dbReference type="PANTHER" id="PTHR43829:SF9">
    <property type="entry name" value="AQUAPORIN-9"/>
    <property type="match status" value="1"/>
</dbReference>
<dbReference type="Pfam" id="PF00230">
    <property type="entry name" value="MIP"/>
    <property type="match status" value="1"/>
</dbReference>
<dbReference type="PRINTS" id="PR00783">
    <property type="entry name" value="MINTRINSICP"/>
</dbReference>
<dbReference type="SUPFAM" id="SSF81338">
    <property type="entry name" value="Aquaporin-like"/>
    <property type="match status" value="1"/>
</dbReference>
<name>GLPF_STRPN</name>
<sequence>MMNELFGEFLGTLILILLGNGVVAGVVLPKTKSNSSGWIVITMGWGIAVAVAVFVSGKLSPAYLNPAVTIGVALKGGLPWASVLPYILAQFAGAMLGQILVWLQFKPHYEAEENAGNILATFSTGPAIKDTVSNLISEILGTFVLVLTIFALGLYDFQAGIGTFAVGTLIVGIGLSLGGTTGYALNPARDLGPRIMHSILPIPNKGDGDWSYAWIPVVGPVIGAALAVLVFSLF</sequence>
<accession>P0A3Q7</accession>
<accession>P52281</accession>
<comment type="function">
    <text evidence="1">Mediates glycerol diffusion across the cytoplasmic membrane via a pore-type mechanism.</text>
</comment>
<comment type="catalytic activity">
    <reaction evidence="1">
        <text>glycerol(in) = glycerol(out)</text>
        <dbReference type="Rhea" id="RHEA:29675"/>
        <dbReference type="ChEBI" id="CHEBI:17754"/>
    </reaction>
</comment>
<comment type="subcellular location">
    <subcellularLocation>
        <location evidence="3">Cell membrane</location>
        <topology evidence="2">Multi-pass membrane protein</topology>
    </subcellularLocation>
</comment>
<comment type="domain">
    <text evidence="3">Aquaporins contain two tandem repeats each containing three membrane-spanning domains and a pore-forming loop with the signature motif Asn-Pro-Ala (NPA).</text>
</comment>
<comment type="similarity">
    <text evidence="3">Belongs to the MIP/aquaporin (TC 1.A.8) family.</text>
</comment>
<evidence type="ECO:0000250" key="1">
    <source>
        <dbReference type="UniProtKB" id="P0AER0"/>
    </source>
</evidence>
<evidence type="ECO:0000255" key="2"/>
<evidence type="ECO:0000305" key="3"/>
<reference key="1">
    <citation type="journal article" date="1995" name="Mol. Microbiol.">
        <title>The genetic basis of colony opacity in Streptococcus pneumoniae: evidence for the effect of box elements on the frequency of phenotypic variation.</title>
        <authorList>
            <person name="Saluja S.K."/>
            <person name="Weiser J.N."/>
        </authorList>
    </citation>
    <scope>NUCLEOTIDE SEQUENCE [GENOMIC DNA]</scope>
    <source>
        <strain>P13</strain>
    </source>
</reference>
<reference key="2">
    <citation type="journal article" date="2001" name="Science">
        <title>Complete genome sequence of a virulent isolate of Streptococcus pneumoniae.</title>
        <authorList>
            <person name="Tettelin H."/>
            <person name="Nelson K.E."/>
            <person name="Paulsen I.T."/>
            <person name="Eisen J.A."/>
            <person name="Read T.D."/>
            <person name="Peterson S.N."/>
            <person name="Heidelberg J.F."/>
            <person name="DeBoy R.T."/>
            <person name="Haft D.H."/>
            <person name="Dodson R.J."/>
            <person name="Durkin A.S."/>
            <person name="Gwinn M.L."/>
            <person name="Kolonay J.F."/>
            <person name="Nelson W.C."/>
            <person name="Peterson J.D."/>
            <person name="Umayam L.A."/>
            <person name="White O."/>
            <person name="Salzberg S.L."/>
            <person name="Lewis M.R."/>
            <person name="Radune D."/>
            <person name="Holtzapple E.K."/>
            <person name="Khouri H.M."/>
            <person name="Wolf A.M."/>
            <person name="Utterback T.R."/>
            <person name="Hansen C.L."/>
            <person name="McDonald L.A."/>
            <person name="Feldblyum T.V."/>
            <person name="Angiuoli S.V."/>
            <person name="Dickinson T."/>
            <person name="Hickey E.K."/>
            <person name="Holt I.E."/>
            <person name="Loftus B.J."/>
            <person name="Yang F."/>
            <person name="Smith H.O."/>
            <person name="Venter J.C."/>
            <person name="Dougherty B.A."/>
            <person name="Morrison D.A."/>
            <person name="Hollingshead S.K."/>
            <person name="Fraser C.M."/>
        </authorList>
    </citation>
    <scope>NUCLEOTIDE SEQUENCE [LARGE SCALE GENOMIC DNA]</scope>
    <source>
        <strain>ATCC BAA-334 / TIGR4</strain>
    </source>
</reference>
<gene>
    <name type="primary">glpF</name>
    <name type="ordered locus">SP_2184</name>
</gene>
<organism>
    <name type="scientific">Streptococcus pneumoniae serotype 4 (strain ATCC BAA-334 / TIGR4)</name>
    <dbReference type="NCBI Taxonomy" id="170187"/>
    <lineage>
        <taxon>Bacteria</taxon>
        <taxon>Bacillati</taxon>
        <taxon>Bacillota</taxon>
        <taxon>Bacilli</taxon>
        <taxon>Lactobacillales</taxon>
        <taxon>Streptococcaceae</taxon>
        <taxon>Streptococcus</taxon>
    </lineage>
</organism>
<keyword id="KW-1003">Cell membrane</keyword>
<keyword id="KW-0472">Membrane</keyword>
<keyword id="KW-1185">Reference proteome</keyword>
<keyword id="KW-0677">Repeat</keyword>
<keyword id="KW-0812">Transmembrane</keyword>
<keyword id="KW-1133">Transmembrane helix</keyword>
<keyword id="KW-0813">Transport</keyword>